<feature type="signal peptide" evidence="3">
    <location>
        <begin position="1"/>
        <end position="25"/>
    </location>
</feature>
<feature type="propeptide" id="PRO_0000004083" evidence="1">
    <location>
        <begin position="26"/>
        <end position="81"/>
    </location>
</feature>
<feature type="peptide" id="PRO_0000004084" description="Calcitonin gene-related peptide 2">
    <location>
        <begin position="84"/>
        <end position="120"/>
    </location>
</feature>
<feature type="propeptide" id="PRO_0000004085" evidence="1">
    <location>
        <begin position="126"/>
        <end position="129"/>
    </location>
</feature>
<feature type="modified residue" description="Phenylalanine amide" evidence="1">
    <location>
        <position position="120"/>
    </location>
</feature>
<feature type="disulfide bond" evidence="2">
    <location>
        <begin position="85"/>
        <end position="90"/>
    </location>
</feature>
<protein>
    <recommendedName>
        <fullName>Calcitonin gene-related peptide 2</fullName>
        <shortName evidence="2">CGRP2</shortName>
    </recommendedName>
    <alternativeName>
        <fullName>Beta-type CGRP</fullName>
    </alternativeName>
    <alternativeName>
        <fullName>Calcitonin gene-related peptide II</fullName>
        <shortName>CGRP-II</shortName>
    </alternativeName>
</protein>
<name>CALCB_HORSE</name>
<evidence type="ECO:0000250" key="1"/>
<evidence type="ECO:0000250" key="2">
    <source>
        <dbReference type="UniProtKB" id="P10092"/>
    </source>
</evidence>
<evidence type="ECO:0000255" key="3"/>
<evidence type="ECO:0000305" key="4"/>
<dbReference type="EMBL" id="AF257470">
    <property type="protein sequence ID" value="AAF70199.1"/>
    <property type="molecule type" value="mRNA"/>
</dbReference>
<dbReference type="RefSeq" id="NP_001075397.1">
    <property type="nucleotide sequence ID" value="NM_001081928.3"/>
</dbReference>
<dbReference type="STRING" id="9796.ENSECAP00000053164"/>
<dbReference type="PaxDb" id="9796-ENSECAP00000053164"/>
<dbReference type="GeneID" id="100034126"/>
<dbReference type="KEGG" id="ecb:100034126"/>
<dbReference type="CTD" id="797"/>
<dbReference type="HOGENOM" id="CLU_122444_1_0_1"/>
<dbReference type="InParanoid" id="Q9N0T3"/>
<dbReference type="OrthoDB" id="9929923at2759"/>
<dbReference type="TreeFam" id="TF333069"/>
<dbReference type="Proteomes" id="UP000002281">
    <property type="component" value="Unplaced"/>
</dbReference>
<dbReference type="GO" id="GO:0005615">
    <property type="term" value="C:extracellular space"/>
    <property type="evidence" value="ECO:0000318"/>
    <property type="project" value="GO_Central"/>
</dbReference>
<dbReference type="GO" id="GO:0031716">
    <property type="term" value="F:calcitonin receptor binding"/>
    <property type="evidence" value="ECO:0000318"/>
    <property type="project" value="GO_Central"/>
</dbReference>
<dbReference type="GO" id="GO:0005179">
    <property type="term" value="F:hormone activity"/>
    <property type="evidence" value="ECO:0007669"/>
    <property type="project" value="UniProtKB-KW"/>
</dbReference>
<dbReference type="GO" id="GO:0007189">
    <property type="term" value="P:adenylate cyclase-activating G protein-coupled receptor signaling pathway"/>
    <property type="evidence" value="ECO:0000318"/>
    <property type="project" value="GO_Central"/>
</dbReference>
<dbReference type="GO" id="GO:0051480">
    <property type="term" value="P:regulation of cytosolic calcium ion concentration"/>
    <property type="evidence" value="ECO:0000318"/>
    <property type="project" value="GO_Central"/>
</dbReference>
<dbReference type="Gene3D" id="6.10.250.2190">
    <property type="match status" value="1"/>
</dbReference>
<dbReference type="InterPro" id="IPR021117">
    <property type="entry name" value="Calcitonin-like"/>
</dbReference>
<dbReference type="InterPro" id="IPR021116">
    <property type="entry name" value="Calcitonin/adrenomedullin"/>
</dbReference>
<dbReference type="InterPro" id="IPR018360">
    <property type="entry name" value="Calcitonin_CS"/>
</dbReference>
<dbReference type="InterPro" id="IPR015476">
    <property type="entry name" value="Calcitonin_gene-rel_peptide"/>
</dbReference>
<dbReference type="InterPro" id="IPR001693">
    <property type="entry name" value="Calcitonin_peptide-like"/>
</dbReference>
<dbReference type="PANTHER" id="PTHR10505:SF3">
    <property type="entry name" value="CALCITONIN GENE-RELATED PEPTIDE 2"/>
    <property type="match status" value="1"/>
</dbReference>
<dbReference type="PANTHER" id="PTHR10505">
    <property type="entry name" value="CALCITONIN-RELATED"/>
    <property type="match status" value="1"/>
</dbReference>
<dbReference type="Pfam" id="PF00214">
    <property type="entry name" value="Calc_CGRP_IAPP"/>
    <property type="match status" value="1"/>
</dbReference>
<dbReference type="PRINTS" id="PR00817">
    <property type="entry name" value="CALCITONINB"/>
</dbReference>
<dbReference type="SMART" id="SM00113">
    <property type="entry name" value="CALCITONIN"/>
    <property type="match status" value="1"/>
</dbReference>
<dbReference type="PROSITE" id="PS00258">
    <property type="entry name" value="CALCITONIN"/>
    <property type="match status" value="1"/>
</dbReference>
<comment type="function">
    <text evidence="2">CALCB/CGRP2 is a peptide hormone that induces vasodilation mediated by the CALCRL-RAMP1 receptor complex. Dilates a variety of vessels including the coronary, cerebral and systemic vasculature. Its abundance in the CNS also points toward a neurotransmitter or neuromodulator role.</text>
</comment>
<comment type="subcellular location">
    <subcellularLocation>
        <location evidence="2">Secreted</location>
    </subcellularLocation>
</comment>
<comment type="similarity">
    <text evidence="4">Belongs to the calcitonin family.</text>
</comment>
<keyword id="KW-0027">Amidation</keyword>
<keyword id="KW-0165">Cleavage on pair of basic residues</keyword>
<keyword id="KW-1015">Disulfide bond</keyword>
<keyword id="KW-0372">Hormone</keyword>
<keyword id="KW-1185">Reference proteome</keyword>
<keyword id="KW-0964">Secreted</keyword>
<keyword id="KW-0732">Signal</keyword>
<proteinExistence type="evidence at transcript level"/>
<reference key="1">
    <citation type="journal article" date="2003" name="Mol. Cell. Endocrinol.">
        <title>Molecular cloning and expression of equine calcitonin, calcitonin gene-related peptide-I, and calcitonin gene-related peptide-II.</title>
        <authorList>
            <person name="Toribio R.E."/>
            <person name="Kohn C.W."/>
            <person name="Leone G.W."/>
            <person name="Capen C.C."/>
            <person name="Rosol T.J."/>
        </authorList>
    </citation>
    <scope>NUCLEOTIDE SEQUENCE [MRNA]</scope>
</reference>
<organism>
    <name type="scientific">Equus caballus</name>
    <name type="common">Horse</name>
    <dbReference type="NCBI Taxonomy" id="9796"/>
    <lineage>
        <taxon>Eukaryota</taxon>
        <taxon>Metazoa</taxon>
        <taxon>Chordata</taxon>
        <taxon>Craniata</taxon>
        <taxon>Vertebrata</taxon>
        <taxon>Euteleostomi</taxon>
        <taxon>Mammalia</taxon>
        <taxon>Eutheria</taxon>
        <taxon>Laurasiatheria</taxon>
        <taxon>Perissodactyla</taxon>
        <taxon>Equidae</taxon>
        <taxon>Equus</taxon>
    </lineage>
</organism>
<gene>
    <name type="primary">CALCB</name>
</gene>
<accession>Q9N0T3</accession>
<sequence>MGFGKPSSFLAFSILVLCQAGSLQAQPLRSSLESLPDPAALSEKEGRLLLAALVKAYVQRKTNELEQEQEQEMEGSSLTAQKRSCNTATCVTHRLAGLLSRSGGVVKSNFVPTDVGSEAFGRRRRDLQA</sequence>